<organism>
    <name type="scientific">Geobacillus thermodenitrificans (strain NG80-2)</name>
    <dbReference type="NCBI Taxonomy" id="420246"/>
    <lineage>
        <taxon>Bacteria</taxon>
        <taxon>Bacillati</taxon>
        <taxon>Bacillota</taxon>
        <taxon>Bacilli</taxon>
        <taxon>Bacillales</taxon>
        <taxon>Anoxybacillaceae</taxon>
        <taxon>Geobacillus</taxon>
    </lineage>
</organism>
<feature type="chain" id="PRO_1000034328" description="Mannonate dehydratase">
    <location>
        <begin position="1"/>
        <end position="371"/>
    </location>
</feature>
<sequence>MKMTFRWFGKDYDTVSLDHIRQIPGVEGIVGALYHIPVGEVWPLEDILELKRQVNKNGFHLEVIESVNVHEDIKLGLPSRERYIENYKQTIRNLSKAGVKVICYNFMPIFDWTRSDLAKRRPDGSTVLAYEKQKVEQIDPEEMIRRIENGANGFLLPGWEPERLKTIKPLFALYKGVTEDDLLDHLRYFLEQIVPVAEECGIQMAIHPDDPPWSVFGLPRIVTNKENLKKIINMVNSPANGLTLCSGSLGANPDNDIPDIFRYFLRMGRVPFVHVRNIEIHTNGDFEETSHRSCDGSLNICEIVKVLHESDFQGYIRPDHGRMIWGEQARPGYGLYDRALGIMYLLGIWDSLENEKRKREGDKTCSQSIQV</sequence>
<evidence type="ECO:0000255" key="1">
    <source>
        <dbReference type="HAMAP-Rule" id="MF_00106"/>
    </source>
</evidence>
<reference key="1">
    <citation type="journal article" date="2007" name="Proc. Natl. Acad. Sci. U.S.A.">
        <title>Genome and proteome of long-chain alkane degrading Geobacillus thermodenitrificans NG80-2 isolated from a deep-subsurface oil reservoir.</title>
        <authorList>
            <person name="Feng L."/>
            <person name="Wang W."/>
            <person name="Cheng J."/>
            <person name="Ren Y."/>
            <person name="Zhao G."/>
            <person name="Gao C."/>
            <person name="Tang Y."/>
            <person name="Liu X."/>
            <person name="Han W."/>
            <person name="Peng X."/>
            <person name="Liu R."/>
            <person name="Wang L."/>
        </authorList>
    </citation>
    <scope>NUCLEOTIDE SEQUENCE [LARGE SCALE GENOMIC DNA]</scope>
    <source>
        <strain>NG80-2</strain>
    </source>
</reference>
<comment type="function">
    <text evidence="1">Catalyzes the dehydration of D-mannonate.</text>
</comment>
<comment type="catalytic activity">
    <reaction evidence="1">
        <text>D-mannonate = 2-dehydro-3-deoxy-D-gluconate + H2O</text>
        <dbReference type="Rhea" id="RHEA:20097"/>
        <dbReference type="ChEBI" id="CHEBI:15377"/>
        <dbReference type="ChEBI" id="CHEBI:17767"/>
        <dbReference type="ChEBI" id="CHEBI:57990"/>
        <dbReference type="EC" id="4.2.1.8"/>
    </reaction>
</comment>
<comment type="cofactor">
    <cofactor evidence="1">
        <name>Fe(2+)</name>
        <dbReference type="ChEBI" id="CHEBI:29033"/>
    </cofactor>
    <cofactor evidence="1">
        <name>Mn(2+)</name>
        <dbReference type="ChEBI" id="CHEBI:29035"/>
    </cofactor>
</comment>
<comment type="pathway">
    <text evidence="1">Carbohydrate metabolism; pentose and glucuronate interconversion.</text>
</comment>
<comment type="similarity">
    <text evidence="1">Belongs to the mannonate dehydratase family.</text>
</comment>
<keyword id="KW-0408">Iron</keyword>
<keyword id="KW-0456">Lyase</keyword>
<keyword id="KW-0464">Manganese</keyword>
<dbReference type="EC" id="4.2.1.8" evidence="1"/>
<dbReference type="EMBL" id="CP000557">
    <property type="protein sequence ID" value="ABO67128.1"/>
    <property type="molecule type" value="Genomic_DNA"/>
</dbReference>
<dbReference type="RefSeq" id="WP_008880075.1">
    <property type="nucleotide sequence ID" value="NC_009328.1"/>
</dbReference>
<dbReference type="SMR" id="A4IP74"/>
<dbReference type="GeneID" id="87624071"/>
<dbReference type="KEGG" id="gtn:GTNG_1764"/>
<dbReference type="eggNOG" id="COG1312">
    <property type="taxonomic scope" value="Bacteria"/>
</dbReference>
<dbReference type="HOGENOM" id="CLU_058621_1_0_9"/>
<dbReference type="UniPathway" id="UPA00246"/>
<dbReference type="Proteomes" id="UP000001578">
    <property type="component" value="Chromosome"/>
</dbReference>
<dbReference type="GO" id="GO:0008198">
    <property type="term" value="F:ferrous iron binding"/>
    <property type="evidence" value="ECO:0007669"/>
    <property type="project" value="TreeGrafter"/>
</dbReference>
<dbReference type="GO" id="GO:0030145">
    <property type="term" value="F:manganese ion binding"/>
    <property type="evidence" value="ECO:0007669"/>
    <property type="project" value="TreeGrafter"/>
</dbReference>
<dbReference type="GO" id="GO:0008927">
    <property type="term" value="F:mannonate dehydratase activity"/>
    <property type="evidence" value="ECO:0007669"/>
    <property type="project" value="UniProtKB-UniRule"/>
</dbReference>
<dbReference type="GO" id="GO:0042840">
    <property type="term" value="P:D-glucuronate catabolic process"/>
    <property type="evidence" value="ECO:0007669"/>
    <property type="project" value="TreeGrafter"/>
</dbReference>
<dbReference type="Gene3D" id="3.20.20.150">
    <property type="entry name" value="Divalent-metal-dependent TIM barrel enzymes"/>
    <property type="match status" value="1"/>
</dbReference>
<dbReference type="HAMAP" id="MF_00106">
    <property type="entry name" value="UxuA"/>
    <property type="match status" value="1"/>
</dbReference>
<dbReference type="InterPro" id="IPR004628">
    <property type="entry name" value="Man_deHydtase"/>
</dbReference>
<dbReference type="InterPro" id="IPR036237">
    <property type="entry name" value="Xyl_isomerase-like_sf"/>
</dbReference>
<dbReference type="NCBIfam" id="NF003027">
    <property type="entry name" value="PRK03906.1"/>
    <property type="match status" value="1"/>
</dbReference>
<dbReference type="NCBIfam" id="TIGR00695">
    <property type="entry name" value="uxuA"/>
    <property type="match status" value="1"/>
</dbReference>
<dbReference type="PANTHER" id="PTHR30387">
    <property type="entry name" value="MANNONATE DEHYDRATASE"/>
    <property type="match status" value="1"/>
</dbReference>
<dbReference type="PANTHER" id="PTHR30387:SF2">
    <property type="entry name" value="MANNONATE DEHYDRATASE"/>
    <property type="match status" value="1"/>
</dbReference>
<dbReference type="Pfam" id="PF03786">
    <property type="entry name" value="UxuA"/>
    <property type="match status" value="1"/>
</dbReference>
<dbReference type="PIRSF" id="PIRSF016049">
    <property type="entry name" value="Man_dehyd"/>
    <property type="match status" value="1"/>
</dbReference>
<dbReference type="SUPFAM" id="SSF51658">
    <property type="entry name" value="Xylose isomerase-like"/>
    <property type="match status" value="1"/>
</dbReference>
<proteinExistence type="inferred from homology"/>
<name>UXUA_GEOTN</name>
<gene>
    <name evidence="1" type="primary">uxuA</name>
    <name type="ordered locus">GTNG_1764</name>
</gene>
<protein>
    <recommendedName>
        <fullName evidence="1">Mannonate dehydratase</fullName>
        <ecNumber evidence="1">4.2.1.8</ecNumber>
    </recommendedName>
    <alternativeName>
        <fullName evidence="1">D-mannonate hydro-lyase</fullName>
    </alternativeName>
</protein>
<accession>A4IP74</accession>